<evidence type="ECO:0000255" key="1">
    <source>
        <dbReference type="HAMAP-Rule" id="MF_00368"/>
    </source>
</evidence>
<evidence type="ECO:0000305" key="2"/>
<name>RL7_MARMS</name>
<gene>
    <name evidence="1" type="primary">rplL</name>
    <name type="ordered locus">Mmwyl1_4284</name>
</gene>
<sequence length="123" mass="12328">MALTKEDIINAVAEMSVMDVVELISAMEEKFGVSAAAAVAAGPAADAGVAAEEQTEFDVVLTAAGDKKVNVIKAVRAATGLGLKEAKAIVDGAPMTVKEAASKEDAAALKAALEEAGASVEIK</sequence>
<comment type="function">
    <text evidence="1">Forms part of the ribosomal stalk which helps the ribosome interact with GTP-bound translation factors. Is thus essential for accurate translation.</text>
</comment>
<comment type="subunit">
    <text evidence="1">Homodimer. Part of the ribosomal stalk of the 50S ribosomal subunit. Forms a multimeric L10(L12)X complex, where L10 forms an elongated spine to which 2 to 4 L12 dimers bind in a sequential fashion. Binds GTP-bound translation factors.</text>
</comment>
<comment type="similarity">
    <text evidence="1">Belongs to the bacterial ribosomal protein bL12 family.</text>
</comment>
<proteinExistence type="inferred from homology"/>
<reference key="1">
    <citation type="submission" date="2007-06" db="EMBL/GenBank/DDBJ databases">
        <title>Complete sequence of Marinomonas sp. MWYL1.</title>
        <authorList>
            <consortium name="US DOE Joint Genome Institute"/>
            <person name="Copeland A."/>
            <person name="Lucas S."/>
            <person name="Lapidus A."/>
            <person name="Barry K."/>
            <person name="Glavina del Rio T."/>
            <person name="Dalin E."/>
            <person name="Tice H."/>
            <person name="Pitluck S."/>
            <person name="Kiss H."/>
            <person name="Brettin T."/>
            <person name="Bruce D."/>
            <person name="Detter J.C."/>
            <person name="Han C."/>
            <person name="Schmutz J."/>
            <person name="Larimer F."/>
            <person name="Land M."/>
            <person name="Hauser L."/>
            <person name="Kyrpides N."/>
            <person name="Kim E."/>
            <person name="Johnston A.W.B."/>
            <person name="Todd J.D."/>
            <person name="Rogers R."/>
            <person name="Wexler M."/>
            <person name="Bond P.L."/>
            <person name="Li Y."/>
            <person name="Richardson P."/>
        </authorList>
    </citation>
    <scope>NUCLEOTIDE SEQUENCE [LARGE SCALE GENOMIC DNA]</scope>
    <source>
        <strain>MWYL1</strain>
    </source>
</reference>
<dbReference type="EMBL" id="CP000749">
    <property type="protein sequence ID" value="ABR73179.1"/>
    <property type="molecule type" value="Genomic_DNA"/>
</dbReference>
<dbReference type="SMR" id="A6W3A0"/>
<dbReference type="STRING" id="400668.Mmwyl1_4284"/>
<dbReference type="KEGG" id="mmw:Mmwyl1_4284"/>
<dbReference type="eggNOG" id="COG0222">
    <property type="taxonomic scope" value="Bacteria"/>
</dbReference>
<dbReference type="HOGENOM" id="CLU_086499_3_2_6"/>
<dbReference type="OrthoDB" id="9811748at2"/>
<dbReference type="GO" id="GO:0022625">
    <property type="term" value="C:cytosolic large ribosomal subunit"/>
    <property type="evidence" value="ECO:0007669"/>
    <property type="project" value="TreeGrafter"/>
</dbReference>
<dbReference type="GO" id="GO:0003729">
    <property type="term" value="F:mRNA binding"/>
    <property type="evidence" value="ECO:0007669"/>
    <property type="project" value="TreeGrafter"/>
</dbReference>
<dbReference type="GO" id="GO:0003735">
    <property type="term" value="F:structural constituent of ribosome"/>
    <property type="evidence" value="ECO:0007669"/>
    <property type="project" value="InterPro"/>
</dbReference>
<dbReference type="GO" id="GO:0006412">
    <property type="term" value="P:translation"/>
    <property type="evidence" value="ECO:0007669"/>
    <property type="project" value="UniProtKB-UniRule"/>
</dbReference>
<dbReference type="CDD" id="cd00387">
    <property type="entry name" value="Ribosomal_L7_L12"/>
    <property type="match status" value="1"/>
</dbReference>
<dbReference type="FunFam" id="3.30.1390.10:FF:000001">
    <property type="entry name" value="50S ribosomal protein L7/L12"/>
    <property type="match status" value="1"/>
</dbReference>
<dbReference type="Gene3D" id="3.30.1390.10">
    <property type="match status" value="1"/>
</dbReference>
<dbReference type="Gene3D" id="1.20.5.710">
    <property type="entry name" value="Single helix bin"/>
    <property type="match status" value="1"/>
</dbReference>
<dbReference type="HAMAP" id="MF_00368">
    <property type="entry name" value="Ribosomal_bL12"/>
    <property type="match status" value="1"/>
</dbReference>
<dbReference type="InterPro" id="IPR000206">
    <property type="entry name" value="Ribosomal_bL12"/>
</dbReference>
<dbReference type="InterPro" id="IPR013823">
    <property type="entry name" value="Ribosomal_bL12_C"/>
</dbReference>
<dbReference type="InterPro" id="IPR014719">
    <property type="entry name" value="Ribosomal_bL12_C/ClpS-like"/>
</dbReference>
<dbReference type="InterPro" id="IPR008932">
    <property type="entry name" value="Ribosomal_bL12_oligo"/>
</dbReference>
<dbReference type="InterPro" id="IPR036235">
    <property type="entry name" value="Ribosomal_bL12_oligo_N_sf"/>
</dbReference>
<dbReference type="NCBIfam" id="TIGR00855">
    <property type="entry name" value="L12"/>
    <property type="match status" value="1"/>
</dbReference>
<dbReference type="PANTHER" id="PTHR45987">
    <property type="entry name" value="39S RIBOSOMAL PROTEIN L12"/>
    <property type="match status" value="1"/>
</dbReference>
<dbReference type="PANTHER" id="PTHR45987:SF4">
    <property type="entry name" value="LARGE RIBOSOMAL SUBUNIT PROTEIN BL12M"/>
    <property type="match status" value="1"/>
</dbReference>
<dbReference type="Pfam" id="PF00542">
    <property type="entry name" value="Ribosomal_L12"/>
    <property type="match status" value="1"/>
</dbReference>
<dbReference type="Pfam" id="PF16320">
    <property type="entry name" value="Ribosomal_L12_N"/>
    <property type="match status" value="1"/>
</dbReference>
<dbReference type="SUPFAM" id="SSF54736">
    <property type="entry name" value="ClpS-like"/>
    <property type="match status" value="1"/>
</dbReference>
<dbReference type="SUPFAM" id="SSF48300">
    <property type="entry name" value="Ribosomal protein L7/12, oligomerisation (N-terminal) domain"/>
    <property type="match status" value="1"/>
</dbReference>
<protein>
    <recommendedName>
        <fullName evidence="1">Large ribosomal subunit protein bL12</fullName>
    </recommendedName>
    <alternativeName>
        <fullName evidence="2">50S ribosomal protein L7/L12</fullName>
    </alternativeName>
</protein>
<feature type="chain" id="PRO_1000079800" description="Large ribosomal subunit protein bL12">
    <location>
        <begin position="1"/>
        <end position="123"/>
    </location>
</feature>
<accession>A6W3A0</accession>
<organism>
    <name type="scientific">Marinomonas sp. (strain MWYL1)</name>
    <dbReference type="NCBI Taxonomy" id="400668"/>
    <lineage>
        <taxon>Bacteria</taxon>
        <taxon>Pseudomonadati</taxon>
        <taxon>Pseudomonadota</taxon>
        <taxon>Gammaproteobacteria</taxon>
        <taxon>Oceanospirillales</taxon>
        <taxon>Oceanospirillaceae</taxon>
        <taxon>Marinomonas</taxon>
    </lineage>
</organism>
<keyword id="KW-0687">Ribonucleoprotein</keyword>
<keyword id="KW-0689">Ribosomal protein</keyword>